<organism>
    <name type="scientific">Vibrio atlanticus (strain LGP32)</name>
    <name type="common">Vibrio splendidus (strain Mel32)</name>
    <dbReference type="NCBI Taxonomy" id="575788"/>
    <lineage>
        <taxon>Bacteria</taxon>
        <taxon>Pseudomonadati</taxon>
        <taxon>Pseudomonadota</taxon>
        <taxon>Gammaproteobacteria</taxon>
        <taxon>Vibrionales</taxon>
        <taxon>Vibrionaceae</taxon>
        <taxon>Vibrio</taxon>
    </lineage>
</organism>
<keyword id="KW-0131">Cell cycle</keyword>
<keyword id="KW-0132">Cell division</keyword>
<keyword id="KW-0963">Cytoplasm</keyword>
<keyword id="KW-0238">DNA-binding</keyword>
<evidence type="ECO:0000255" key="1">
    <source>
        <dbReference type="HAMAP-Rule" id="MF_01073"/>
    </source>
</evidence>
<dbReference type="EMBL" id="FM954972">
    <property type="protein sequence ID" value="CAV18594.1"/>
    <property type="molecule type" value="Genomic_DNA"/>
</dbReference>
<dbReference type="SMR" id="B7VNL8"/>
<dbReference type="STRING" id="575788.VS_1431"/>
<dbReference type="KEGG" id="vsp:VS_1431"/>
<dbReference type="eggNOG" id="COG3120">
    <property type="taxonomic scope" value="Bacteria"/>
</dbReference>
<dbReference type="HOGENOM" id="CLU_142157_0_0_6"/>
<dbReference type="Proteomes" id="UP000009100">
    <property type="component" value="Chromosome 1"/>
</dbReference>
<dbReference type="GO" id="GO:0005737">
    <property type="term" value="C:cytoplasm"/>
    <property type="evidence" value="ECO:0007669"/>
    <property type="project" value="UniProtKB-SubCell"/>
</dbReference>
<dbReference type="GO" id="GO:0043565">
    <property type="term" value="F:sequence-specific DNA binding"/>
    <property type="evidence" value="ECO:0007669"/>
    <property type="project" value="UniProtKB-UniRule"/>
</dbReference>
<dbReference type="GO" id="GO:0051301">
    <property type="term" value="P:cell division"/>
    <property type="evidence" value="ECO:0007669"/>
    <property type="project" value="UniProtKB-UniRule"/>
</dbReference>
<dbReference type="GO" id="GO:0006355">
    <property type="term" value="P:regulation of DNA-templated transcription"/>
    <property type="evidence" value="ECO:0007669"/>
    <property type="project" value="InterPro"/>
</dbReference>
<dbReference type="Gene3D" id="1.20.1270.380">
    <property type="entry name" value="MatP, N-terminal domain"/>
    <property type="match status" value="1"/>
</dbReference>
<dbReference type="Gene3D" id="1.10.1220.10">
    <property type="entry name" value="Met repressor-like"/>
    <property type="match status" value="1"/>
</dbReference>
<dbReference type="HAMAP" id="MF_01073">
    <property type="entry name" value="MatP"/>
    <property type="match status" value="1"/>
</dbReference>
<dbReference type="InterPro" id="IPR013321">
    <property type="entry name" value="Arc_rbn_hlx_hlx"/>
</dbReference>
<dbReference type="InterPro" id="IPR009390">
    <property type="entry name" value="MatP"/>
</dbReference>
<dbReference type="InterPro" id="IPR035375">
    <property type="entry name" value="MatP_C"/>
</dbReference>
<dbReference type="InterPro" id="IPR035087">
    <property type="entry name" value="MatP_N"/>
</dbReference>
<dbReference type="InterPro" id="IPR038339">
    <property type="entry name" value="MatP_N_sf"/>
</dbReference>
<dbReference type="NCBIfam" id="NF003471">
    <property type="entry name" value="PRK05097.1"/>
    <property type="match status" value="1"/>
</dbReference>
<dbReference type="Pfam" id="PF06303">
    <property type="entry name" value="MatP"/>
    <property type="match status" value="1"/>
</dbReference>
<dbReference type="Pfam" id="PF17414">
    <property type="entry name" value="MatP_C"/>
    <property type="match status" value="1"/>
</dbReference>
<name>MATP_VIBA3</name>
<sequence length="151" mass="17493">MKYQQLENLECGWKWNYLVKKWKEGESITCHIDSSEADVAVQALLKLEHQPTGVLEWISDNMSPELDNKLKQAIRAKRKRHFNAEQVHTKKKSIDLDYRVWEKLSQRANELGCTLSDAIEYLVSEASRSEQASKTVTNLKEDLSKLLSDDK</sequence>
<protein>
    <recommendedName>
        <fullName evidence="1">Macrodomain Ter protein</fullName>
    </recommendedName>
</protein>
<gene>
    <name evidence="1" type="primary">matP</name>
    <name type="ordered locus">VS_1431</name>
</gene>
<feature type="chain" id="PRO_1000149766" description="Macrodomain Ter protein">
    <location>
        <begin position="1"/>
        <end position="151"/>
    </location>
</feature>
<reference key="1">
    <citation type="submission" date="2009-02" db="EMBL/GenBank/DDBJ databases">
        <title>Vibrio splendidus str. LGP32 complete genome.</title>
        <authorList>
            <person name="Mazel D."/>
            <person name="Le Roux F."/>
        </authorList>
    </citation>
    <scope>NUCLEOTIDE SEQUENCE [LARGE SCALE GENOMIC DNA]</scope>
    <source>
        <strain>LGP32</strain>
    </source>
</reference>
<accession>B7VNL8</accession>
<comment type="function">
    <text evidence="1">Required for spatial organization of the terminus region of the chromosome (Ter macrodomain) during the cell cycle. Prevents early segregation of duplicated Ter macrodomains during cell division. Binds specifically to matS, which is a 13 bp signature motif repeated within the Ter macrodomain.</text>
</comment>
<comment type="subunit">
    <text evidence="1">Homodimer.</text>
</comment>
<comment type="subcellular location">
    <subcellularLocation>
        <location evidence="1">Cytoplasm</location>
    </subcellularLocation>
</comment>
<comment type="similarity">
    <text evidence="1">Belongs to the MatP family.</text>
</comment>
<proteinExistence type="inferred from homology"/>